<dbReference type="EMBL" id="CP001164">
    <property type="protein sequence ID" value="ACI37126.1"/>
    <property type="molecule type" value="Genomic_DNA"/>
</dbReference>
<dbReference type="RefSeq" id="WP_000681927.1">
    <property type="nucleotide sequence ID" value="NC_011353.1"/>
</dbReference>
<dbReference type="SMR" id="B5YS22"/>
<dbReference type="KEGG" id="ecf:ECH74115_4446"/>
<dbReference type="HOGENOM" id="CLU_053334_0_0_6"/>
<dbReference type="UniPathway" id="UPA00704">
    <property type="reaction ID" value="UER00716"/>
</dbReference>
<dbReference type="GO" id="GO:0005886">
    <property type="term" value="C:plasma membrane"/>
    <property type="evidence" value="ECO:0007669"/>
    <property type="project" value="TreeGrafter"/>
</dbReference>
<dbReference type="GO" id="GO:0005975">
    <property type="term" value="P:carbohydrate metabolic process"/>
    <property type="evidence" value="ECO:0007669"/>
    <property type="project" value="InterPro"/>
</dbReference>
<dbReference type="GO" id="GO:2001059">
    <property type="term" value="P:D-tagatose 6-phosphate catabolic process"/>
    <property type="evidence" value="ECO:0007669"/>
    <property type="project" value="UniProtKB-UniRule"/>
</dbReference>
<dbReference type="GO" id="GO:0009401">
    <property type="term" value="P:phosphoenolpyruvate-dependent sugar phosphotransferase system"/>
    <property type="evidence" value="ECO:0007669"/>
    <property type="project" value="TreeGrafter"/>
</dbReference>
<dbReference type="Gene3D" id="3.20.20.70">
    <property type="entry name" value="Aldolase class I"/>
    <property type="match status" value="1"/>
</dbReference>
<dbReference type="Gene3D" id="1.10.400.20">
    <property type="entry name" value="putative tagatose 6-phosphate kinase domain like"/>
    <property type="match status" value="1"/>
</dbReference>
<dbReference type="HAMAP" id="MF_01295">
    <property type="entry name" value="Tagatose_aldol_KbaZ"/>
    <property type="match status" value="1"/>
</dbReference>
<dbReference type="InterPro" id="IPR013785">
    <property type="entry name" value="Aldolase_TIM"/>
</dbReference>
<dbReference type="InterPro" id="IPR012062">
    <property type="entry name" value="GatZ/KbaZ-like"/>
</dbReference>
<dbReference type="InterPro" id="IPR050303">
    <property type="entry name" value="GatZ_KbaZ_carbometab"/>
</dbReference>
<dbReference type="InterPro" id="IPR023435">
    <property type="entry name" value="TagBP_ald_KbaZ"/>
</dbReference>
<dbReference type="NCBIfam" id="TIGR02810">
    <property type="entry name" value="agaZ_gatZ"/>
    <property type="match status" value="1"/>
</dbReference>
<dbReference type="NCBIfam" id="NF012002">
    <property type="entry name" value="PRK15458.1"/>
    <property type="match status" value="1"/>
</dbReference>
<dbReference type="PANTHER" id="PTHR32502:SF2">
    <property type="entry name" value="D-TAGATOSE-1,6-BISPHOSPHATE ALDOLASE SUBUNIT KBAZ"/>
    <property type="match status" value="1"/>
</dbReference>
<dbReference type="PANTHER" id="PTHR32502">
    <property type="entry name" value="N-ACETYLGALACTOSAMINE PERMEASE II COMPONENT-RELATED"/>
    <property type="match status" value="1"/>
</dbReference>
<dbReference type="Pfam" id="PF08013">
    <property type="entry name" value="GatZ_KbaZ-like"/>
    <property type="match status" value="1"/>
</dbReference>
<dbReference type="PIRSF" id="PIRSF009264">
    <property type="entry name" value="TagBP_ald_AgaZ"/>
    <property type="match status" value="1"/>
</dbReference>
<dbReference type="SUPFAM" id="SSF51569">
    <property type="entry name" value="Aldolase"/>
    <property type="match status" value="1"/>
</dbReference>
<protein>
    <recommendedName>
        <fullName evidence="1">D-tagatose-1,6-bisphosphate aldolase subunit KbaZ</fullName>
    </recommendedName>
</protein>
<reference key="1">
    <citation type="journal article" date="2011" name="Proc. Natl. Acad. Sci. U.S.A.">
        <title>Genomic anatomy of Escherichia coli O157:H7 outbreaks.</title>
        <authorList>
            <person name="Eppinger M."/>
            <person name="Mammel M.K."/>
            <person name="Leclerc J.E."/>
            <person name="Ravel J."/>
            <person name="Cebula T.A."/>
        </authorList>
    </citation>
    <scope>NUCLEOTIDE SEQUENCE [LARGE SCALE GENOMIC DNA]</scope>
    <source>
        <strain>EC4115 / EHEC</strain>
    </source>
</reference>
<organism>
    <name type="scientific">Escherichia coli O157:H7 (strain EC4115 / EHEC)</name>
    <dbReference type="NCBI Taxonomy" id="444450"/>
    <lineage>
        <taxon>Bacteria</taxon>
        <taxon>Pseudomonadati</taxon>
        <taxon>Pseudomonadota</taxon>
        <taxon>Gammaproteobacteria</taxon>
        <taxon>Enterobacterales</taxon>
        <taxon>Enterobacteriaceae</taxon>
        <taxon>Escherichia</taxon>
    </lineage>
</organism>
<evidence type="ECO:0000255" key="1">
    <source>
        <dbReference type="HAMAP-Rule" id="MF_01295"/>
    </source>
</evidence>
<name>KBAZ_ECO5E</name>
<feature type="chain" id="PRO_0000372533" description="D-tagatose-1,6-bisphosphate aldolase subunit KbaZ">
    <location>
        <begin position="1"/>
        <end position="426"/>
    </location>
</feature>
<proteinExistence type="inferred from homology"/>
<comment type="function">
    <text evidence="1">Component of the tagatose-1,6-bisphosphate aldolase KbaYZ that is required for full activity and stability of the Y subunit. Could have a chaperone-like function for the proper and stable folding of KbaY. When expressed alone, KbaZ does not show any aldolase activity.</text>
</comment>
<comment type="pathway">
    <text evidence="1">Carbohydrate metabolism; D-tagatose 6-phosphate degradation; D-glyceraldehyde 3-phosphate and glycerone phosphate from D-tagatose 6-phosphate: step 2/2.</text>
</comment>
<comment type="subunit">
    <text evidence="1">Forms a complex with KbaY.</text>
</comment>
<comment type="similarity">
    <text evidence="1">Belongs to the GatZ/KbaZ family. KbaZ subfamily.</text>
</comment>
<accession>B5YS22</accession>
<gene>
    <name evidence="1" type="primary">kbaZ</name>
    <name type="ordered locus">ECH74115_4446</name>
</gene>
<sequence length="426" mass="47177">MKHLTEMVRQHKAGKTNGIYAVCSAHPLVLEAAIRYASANQTPLLIEATSNQVDQFGGYTGMTPADFRGFVCQLADSLNFPQDALILGGDHLGPNRWQNLPAAQAMANADDLIKSYVAAGFKKIHLDCSMSCQDDPIPLTDDIVAERAARLAKVAEETCLEHFGEADLEYVIGTEVPVPGGAHETLSELAVTTPDAARATLEAHRHAFEKQGLNAIWPRIIALVVQPGVEFDHTNVIDYQPAKATALSQMVESYETLIFEAHSTDYQTPQSLRQLVIDHFAILKVGPALTFALREALFSLAAIEEELVPAKACSGLRQVLENVMLNRPEYWQSHYHGDGNARRLARGYSYSDRVRYYWPDSQIDDAFAHLVRNLADSPIPLPLISQYLPLQYVKVRSGELQPTPRELIINHIQDILAQYHTACEGQ</sequence>